<accession>Q8EGS1</accession>
<comment type="function">
    <text evidence="1">Involved in the regulation of the intracellular balance of NAD and NADP, and is a key enzyme in the biosynthesis of NADP. Catalyzes specifically the phosphorylation on 2'-hydroxyl of the adenosine moiety of NAD to yield NADP.</text>
</comment>
<comment type="catalytic activity">
    <reaction evidence="1">
        <text>NAD(+) + ATP = ADP + NADP(+) + H(+)</text>
        <dbReference type="Rhea" id="RHEA:18629"/>
        <dbReference type="ChEBI" id="CHEBI:15378"/>
        <dbReference type="ChEBI" id="CHEBI:30616"/>
        <dbReference type="ChEBI" id="CHEBI:57540"/>
        <dbReference type="ChEBI" id="CHEBI:58349"/>
        <dbReference type="ChEBI" id="CHEBI:456216"/>
        <dbReference type="EC" id="2.7.1.23"/>
    </reaction>
</comment>
<comment type="cofactor">
    <cofactor evidence="1">
        <name>a divalent metal cation</name>
        <dbReference type="ChEBI" id="CHEBI:60240"/>
    </cofactor>
</comment>
<comment type="subcellular location">
    <subcellularLocation>
        <location evidence="1">Cytoplasm</location>
    </subcellularLocation>
</comment>
<comment type="similarity">
    <text evidence="1">Belongs to the NAD kinase family.</text>
</comment>
<gene>
    <name evidence="1" type="primary">nadK</name>
    <name type="ordered locus">SO_1523</name>
</gene>
<evidence type="ECO:0000255" key="1">
    <source>
        <dbReference type="HAMAP-Rule" id="MF_00361"/>
    </source>
</evidence>
<reference key="1">
    <citation type="journal article" date="2002" name="Nat. Biotechnol.">
        <title>Genome sequence of the dissimilatory metal ion-reducing bacterium Shewanella oneidensis.</title>
        <authorList>
            <person name="Heidelberg J.F."/>
            <person name="Paulsen I.T."/>
            <person name="Nelson K.E."/>
            <person name="Gaidos E.J."/>
            <person name="Nelson W.C."/>
            <person name="Read T.D."/>
            <person name="Eisen J.A."/>
            <person name="Seshadri R."/>
            <person name="Ward N.L."/>
            <person name="Methe B.A."/>
            <person name="Clayton R.A."/>
            <person name="Meyer T."/>
            <person name="Tsapin A."/>
            <person name="Scott J."/>
            <person name="Beanan M.J."/>
            <person name="Brinkac L.M."/>
            <person name="Daugherty S.C."/>
            <person name="DeBoy R.T."/>
            <person name="Dodson R.J."/>
            <person name="Durkin A.S."/>
            <person name="Haft D.H."/>
            <person name="Kolonay J.F."/>
            <person name="Madupu R."/>
            <person name="Peterson J.D."/>
            <person name="Umayam L.A."/>
            <person name="White O."/>
            <person name="Wolf A.M."/>
            <person name="Vamathevan J.J."/>
            <person name="Weidman J.F."/>
            <person name="Impraim M."/>
            <person name="Lee K."/>
            <person name="Berry K.J."/>
            <person name="Lee C."/>
            <person name="Mueller J."/>
            <person name="Khouri H.M."/>
            <person name="Gill J."/>
            <person name="Utterback T.R."/>
            <person name="McDonald L.A."/>
            <person name="Feldblyum T.V."/>
            <person name="Smith H.O."/>
            <person name="Venter J.C."/>
            <person name="Nealson K.H."/>
            <person name="Fraser C.M."/>
        </authorList>
    </citation>
    <scope>NUCLEOTIDE SEQUENCE [LARGE SCALE GENOMIC DNA]</scope>
    <source>
        <strain>ATCC 700550 / JCM 31522 / CIP 106686 / LMG 19005 / NCIMB 14063 / MR-1</strain>
    </source>
</reference>
<feature type="chain" id="PRO_0000120656" description="NAD kinase">
    <location>
        <begin position="1"/>
        <end position="292"/>
    </location>
</feature>
<feature type="active site" description="Proton acceptor" evidence="1">
    <location>
        <position position="72"/>
    </location>
</feature>
<feature type="binding site" evidence="1">
    <location>
        <begin position="72"/>
        <end position="73"/>
    </location>
    <ligand>
        <name>NAD(+)</name>
        <dbReference type="ChEBI" id="CHEBI:57540"/>
    </ligand>
</feature>
<feature type="binding site" evidence="1">
    <location>
        <begin position="146"/>
        <end position="147"/>
    </location>
    <ligand>
        <name>NAD(+)</name>
        <dbReference type="ChEBI" id="CHEBI:57540"/>
    </ligand>
</feature>
<feature type="binding site" evidence="1">
    <location>
        <position position="157"/>
    </location>
    <ligand>
        <name>NAD(+)</name>
        <dbReference type="ChEBI" id="CHEBI:57540"/>
    </ligand>
</feature>
<feature type="binding site" evidence="1">
    <location>
        <position position="174"/>
    </location>
    <ligand>
        <name>NAD(+)</name>
        <dbReference type="ChEBI" id="CHEBI:57540"/>
    </ligand>
</feature>
<feature type="binding site" evidence="1">
    <location>
        <position position="176"/>
    </location>
    <ligand>
        <name>NAD(+)</name>
        <dbReference type="ChEBI" id="CHEBI:57540"/>
    </ligand>
</feature>
<feature type="binding site" evidence="1">
    <location>
        <begin position="187"/>
        <end position="192"/>
    </location>
    <ligand>
        <name>NAD(+)</name>
        <dbReference type="ChEBI" id="CHEBI:57540"/>
    </ligand>
</feature>
<sequence>MTTKFHTIGLIGKPHHPGTNQTLKRLHHWLTMQGYEVLVEERVATELGPHIVAVDLLEIGERCDLAIVVGGDGNMLGAARVLARFEVGVIGVNRGNLGFLTDLPPDAFEEALAKVLDGEFDTEHRFLLEAEVYRHGQLKASNTAVNEAVLHPGKIAHMIEFEVYIDNQFMYSQRADGMIVSTPTGSTAYALSAGGAILTPNLQALILVPMFPHTLSCRPIVVDACSTIKMVVSPENGENLEVSCDGHVHLAVLPGDEIIVRRSSEQLRLIHPKGHNYFHVLRSKLGWGSKLF</sequence>
<name>NADK_SHEON</name>
<keyword id="KW-0067">ATP-binding</keyword>
<keyword id="KW-0963">Cytoplasm</keyword>
<keyword id="KW-0418">Kinase</keyword>
<keyword id="KW-0520">NAD</keyword>
<keyword id="KW-0521">NADP</keyword>
<keyword id="KW-0547">Nucleotide-binding</keyword>
<keyword id="KW-1185">Reference proteome</keyword>
<keyword id="KW-0808">Transferase</keyword>
<organism>
    <name type="scientific">Shewanella oneidensis (strain ATCC 700550 / JCM 31522 / CIP 106686 / LMG 19005 / NCIMB 14063 / MR-1)</name>
    <dbReference type="NCBI Taxonomy" id="211586"/>
    <lineage>
        <taxon>Bacteria</taxon>
        <taxon>Pseudomonadati</taxon>
        <taxon>Pseudomonadota</taxon>
        <taxon>Gammaproteobacteria</taxon>
        <taxon>Alteromonadales</taxon>
        <taxon>Shewanellaceae</taxon>
        <taxon>Shewanella</taxon>
    </lineage>
</organism>
<proteinExistence type="inferred from homology"/>
<dbReference type="EC" id="2.7.1.23" evidence="1"/>
<dbReference type="EMBL" id="AE014299">
    <property type="protein sequence ID" value="AAN54584.2"/>
    <property type="molecule type" value="Genomic_DNA"/>
</dbReference>
<dbReference type="RefSeq" id="NP_717140.2">
    <property type="nucleotide sequence ID" value="NC_004347.2"/>
</dbReference>
<dbReference type="RefSeq" id="WP_011071702.1">
    <property type="nucleotide sequence ID" value="NZ_CP053946.1"/>
</dbReference>
<dbReference type="SMR" id="Q8EGS1"/>
<dbReference type="STRING" id="211586.SO_1523"/>
<dbReference type="PaxDb" id="211586-SO_1523"/>
<dbReference type="KEGG" id="son:SO_1523"/>
<dbReference type="PATRIC" id="fig|211586.12.peg.1466"/>
<dbReference type="eggNOG" id="COG0061">
    <property type="taxonomic scope" value="Bacteria"/>
</dbReference>
<dbReference type="HOGENOM" id="CLU_008831_0_1_6"/>
<dbReference type="OrthoDB" id="9774737at2"/>
<dbReference type="PhylomeDB" id="Q8EGS1"/>
<dbReference type="BioCyc" id="SONE211586:G1GMP-1407-MONOMER"/>
<dbReference type="Proteomes" id="UP000008186">
    <property type="component" value="Chromosome"/>
</dbReference>
<dbReference type="GO" id="GO:0005737">
    <property type="term" value="C:cytoplasm"/>
    <property type="evidence" value="ECO:0007669"/>
    <property type="project" value="UniProtKB-SubCell"/>
</dbReference>
<dbReference type="GO" id="GO:0005524">
    <property type="term" value="F:ATP binding"/>
    <property type="evidence" value="ECO:0007669"/>
    <property type="project" value="UniProtKB-KW"/>
</dbReference>
<dbReference type="GO" id="GO:0046872">
    <property type="term" value="F:metal ion binding"/>
    <property type="evidence" value="ECO:0007669"/>
    <property type="project" value="UniProtKB-UniRule"/>
</dbReference>
<dbReference type="GO" id="GO:0051287">
    <property type="term" value="F:NAD binding"/>
    <property type="evidence" value="ECO:0007669"/>
    <property type="project" value="UniProtKB-ARBA"/>
</dbReference>
<dbReference type="GO" id="GO:0003951">
    <property type="term" value="F:NAD+ kinase activity"/>
    <property type="evidence" value="ECO:0000318"/>
    <property type="project" value="GO_Central"/>
</dbReference>
<dbReference type="GO" id="GO:0019674">
    <property type="term" value="P:NAD metabolic process"/>
    <property type="evidence" value="ECO:0007669"/>
    <property type="project" value="InterPro"/>
</dbReference>
<dbReference type="GO" id="GO:0006741">
    <property type="term" value="P:NADP biosynthetic process"/>
    <property type="evidence" value="ECO:0000318"/>
    <property type="project" value="GO_Central"/>
</dbReference>
<dbReference type="FunFam" id="2.60.200.30:FF:000001">
    <property type="entry name" value="NAD kinase"/>
    <property type="match status" value="1"/>
</dbReference>
<dbReference type="Gene3D" id="3.40.50.10330">
    <property type="entry name" value="Probable inorganic polyphosphate/atp-NAD kinase, domain 1"/>
    <property type="match status" value="1"/>
</dbReference>
<dbReference type="Gene3D" id="2.60.200.30">
    <property type="entry name" value="Probable inorganic polyphosphate/atp-NAD kinase, domain 2"/>
    <property type="match status" value="1"/>
</dbReference>
<dbReference type="HAMAP" id="MF_00361">
    <property type="entry name" value="NAD_kinase"/>
    <property type="match status" value="1"/>
</dbReference>
<dbReference type="InterPro" id="IPR017438">
    <property type="entry name" value="ATP-NAD_kinase_N"/>
</dbReference>
<dbReference type="InterPro" id="IPR017437">
    <property type="entry name" value="ATP-NAD_kinase_PpnK-typ_C"/>
</dbReference>
<dbReference type="InterPro" id="IPR016064">
    <property type="entry name" value="NAD/diacylglycerol_kinase_sf"/>
</dbReference>
<dbReference type="InterPro" id="IPR002504">
    <property type="entry name" value="NADK"/>
</dbReference>
<dbReference type="NCBIfam" id="NF002306">
    <property type="entry name" value="PRK01231.1"/>
    <property type="match status" value="1"/>
</dbReference>
<dbReference type="NCBIfam" id="NF002893">
    <property type="entry name" value="PRK03378.1"/>
    <property type="match status" value="1"/>
</dbReference>
<dbReference type="PANTHER" id="PTHR20275">
    <property type="entry name" value="NAD KINASE"/>
    <property type="match status" value="1"/>
</dbReference>
<dbReference type="PANTHER" id="PTHR20275:SF0">
    <property type="entry name" value="NAD KINASE"/>
    <property type="match status" value="1"/>
</dbReference>
<dbReference type="Pfam" id="PF01513">
    <property type="entry name" value="NAD_kinase"/>
    <property type="match status" value="1"/>
</dbReference>
<dbReference type="Pfam" id="PF20143">
    <property type="entry name" value="NAD_kinase_C"/>
    <property type="match status" value="1"/>
</dbReference>
<dbReference type="SUPFAM" id="SSF111331">
    <property type="entry name" value="NAD kinase/diacylglycerol kinase-like"/>
    <property type="match status" value="1"/>
</dbReference>
<protein>
    <recommendedName>
        <fullName evidence="1">NAD kinase</fullName>
        <ecNumber evidence="1">2.7.1.23</ecNumber>
    </recommendedName>
    <alternativeName>
        <fullName evidence="1">ATP-dependent NAD kinase</fullName>
    </alternativeName>
</protein>